<dbReference type="EC" id="3.1.21.10" evidence="1"/>
<dbReference type="EMBL" id="AE008692">
    <property type="protein sequence ID" value="AAV88778.1"/>
    <property type="molecule type" value="Genomic_DNA"/>
</dbReference>
<dbReference type="RefSeq" id="WP_011240114.1">
    <property type="nucleotide sequence ID" value="NZ_CP035711.1"/>
</dbReference>
<dbReference type="SMR" id="Q5NR76"/>
<dbReference type="STRING" id="264203.ZMO0154"/>
<dbReference type="GeneID" id="79904603"/>
<dbReference type="KEGG" id="zmo:ZMO0154"/>
<dbReference type="eggNOG" id="COG0817">
    <property type="taxonomic scope" value="Bacteria"/>
</dbReference>
<dbReference type="HOGENOM" id="CLU_091257_1_0_5"/>
<dbReference type="Proteomes" id="UP000001173">
    <property type="component" value="Chromosome"/>
</dbReference>
<dbReference type="GO" id="GO:0005737">
    <property type="term" value="C:cytoplasm"/>
    <property type="evidence" value="ECO:0007669"/>
    <property type="project" value="UniProtKB-SubCell"/>
</dbReference>
<dbReference type="GO" id="GO:0048476">
    <property type="term" value="C:Holliday junction resolvase complex"/>
    <property type="evidence" value="ECO:0007669"/>
    <property type="project" value="UniProtKB-UniRule"/>
</dbReference>
<dbReference type="GO" id="GO:0008821">
    <property type="term" value="F:crossover junction DNA endonuclease activity"/>
    <property type="evidence" value="ECO:0007669"/>
    <property type="project" value="UniProtKB-UniRule"/>
</dbReference>
<dbReference type="GO" id="GO:0003677">
    <property type="term" value="F:DNA binding"/>
    <property type="evidence" value="ECO:0007669"/>
    <property type="project" value="UniProtKB-KW"/>
</dbReference>
<dbReference type="GO" id="GO:0000287">
    <property type="term" value="F:magnesium ion binding"/>
    <property type="evidence" value="ECO:0007669"/>
    <property type="project" value="UniProtKB-UniRule"/>
</dbReference>
<dbReference type="GO" id="GO:0006310">
    <property type="term" value="P:DNA recombination"/>
    <property type="evidence" value="ECO:0007669"/>
    <property type="project" value="UniProtKB-UniRule"/>
</dbReference>
<dbReference type="GO" id="GO:0006281">
    <property type="term" value="P:DNA repair"/>
    <property type="evidence" value="ECO:0007669"/>
    <property type="project" value="UniProtKB-UniRule"/>
</dbReference>
<dbReference type="CDD" id="cd16962">
    <property type="entry name" value="RuvC"/>
    <property type="match status" value="1"/>
</dbReference>
<dbReference type="FunFam" id="3.30.420.10:FF:000002">
    <property type="entry name" value="Crossover junction endodeoxyribonuclease RuvC"/>
    <property type="match status" value="1"/>
</dbReference>
<dbReference type="Gene3D" id="3.30.420.10">
    <property type="entry name" value="Ribonuclease H-like superfamily/Ribonuclease H"/>
    <property type="match status" value="1"/>
</dbReference>
<dbReference type="HAMAP" id="MF_00034">
    <property type="entry name" value="RuvC"/>
    <property type="match status" value="1"/>
</dbReference>
<dbReference type="InterPro" id="IPR012337">
    <property type="entry name" value="RNaseH-like_sf"/>
</dbReference>
<dbReference type="InterPro" id="IPR036397">
    <property type="entry name" value="RNaseH_sf"/>
</dbReference>
<dbReference type="InterPro" id="IPR020563">
    <property type="entry name" value="X-over_junc_endoDNase_Mg_BS"/>
</dbReference>
<dbReference type="InterPro" id="IPR002176">
    <property type="entry name" value="X-over_junc_endoDNase_RuvC"/>
</dbReference>
<dbReference type="NCBIfam" id="TIGR00228">
    <property type="entry name" value="ruvC"/>
    <property type="match status" value="1"/>
</dbReference>
<dbReference type="PANTHER" id="PTHR30194">
    <property type="entry name" value="CROSSOVER JUNCTION ENDODEOXYRIBONUCLEASE RUVC"/>
    <property type="match status" value="1"/>
</dbReference>
<dbReference type="PANTHER" id="PTHR30194:SF3">
    <property type="entry name" value="CROSSOVER JUNCTION ENDODEOXYRIBONUCLEASE RUVC"/>
    <property type="match status" value="1"/>
</dbReference>
<dbReference type="Pfam" id="PF02075">
    <property type="entry name" value="RuvC"/>
    <property type="match status" value="1"/>
</dbReference>
<dbReference type="PRINTS" id="PR00696">
    <property type="entry name" value="RSOLVASERUVC"/>
</dbReference>
<dbReference type="SUPFAM" id="SSF53098">
    <property type="entry name" value="Ribonuclease H-like"/>
    <property type="match status" value="1"/>
</dbReference>
<dbReference type="PROSITE" id="PS01321">
    <property type="entry name" value="RUVC"/>
    <property type="match status" value="1"/>
</dbReference>
<name>RUVC_ZYMMO</name>
<sequence>MIFLGLDPGLGTTGWGAITVEGNRLSHIANGQIRTDPSMALARRLALLHDALAAVIASHQPEMAAVEEVLGNSNAQSTLKLGQARGIALFSLAEAGLSVGEYHPNVVKKAVVGTGSADKKQVQAMVSRLLPGVKLAGPDAADALAVAITHAHHHASARGYARRVRAS</sequence>
<comment type="function">
    <text evidence="1">The RuvA-RuvB-RuvC complex processes Holliday junction (HJ) DNA during genetic recombination and DNA repair. Endonuclease that resolves HJ intermediates. Cleaves cruciform DNA by making single-stranded nicks across the HJ at symmetrical positions within the homologous arms, yielding a 5'-phosphate and a 3'-hydroxyl group; requires a central core of homology in the junction. The consensus cleavage sequence is 5'-(A/T)TT(C/G)-3'. Cleavage occurs on the 3'-side of the TT dinucleotide at the point of strand exchange. HJ branch migration catalyzed by RuvA-RuvB allows RuvC to scan DNA until it finds its consensus sequence, where it cleaves and resolves the cruciform DNA.</text>
</comment>
<comment type="catalytic activity">
    <reaction evidence="1">
        <text>Endonucleolytic cleavage at a junction such as a reciprocal single-stranded crossover between two homologous DNA duplexes (Holliday junction).</text>
        <dbReference type="EC" id="3.1.21.10"/>
    </reaction>
</comment>
<comment type="cofactor">
    <cofactor evidence="1">
        <name>Mg(2+)</name>
        <dbReference type="ChEBI" id="CHEBI:18420"/>
    </cofactor>
    <text evidence="1">Binds 2 Mg(2+) ion per subunit.</text>
</comment>
<comment type="subunit">
    <text evidence="1">Homodimer which binds Holliday junction (HJ) DNA. The HJ becomes 2-fold symmetrical on binding to RuvC with unstacked arms; it has a different conformation from HJ DNA in complex with RuvA. In the full resolvosome a probable DNA-RuvA(4)-RuvB(12)-RuvC(2) complex forms which resolves the HJ.</text>
</comment>
<comment type="subcellular location">
    <subcellularLocation>
        <location evidence="1">Cytoplasm</location>
    </subcellularLocation>
</comment>
<comment type="similarity">
    <text evidence="1">Belongs to the RuvC family.</text>
</comment>
<protein>
    <recommendedName>
        <fullName evidence="1">Crossover junction endodeoxyribonuclease RuvC</fullName>
        <ecNumber evidence="1">3.1.21.10</ecNumber>
    </recommendedName>
    <alternativeName>
        <fullName evidence="1">Holliday junction nuclease RuvC</fullName>
    </alternativeName>
    <alternativeName>
        <fullName evidence="1">Holliday junction resolvase RuvC</fullName>
    </alternativeName>
</protein>
<keyword id="KW-0963">Cytoplasm</keyword>
<keyword id="KW-0227">DNA damage</keyword>
<keyword id="KW-0233">DNA recombination</keyword>
<keyword id="KW-0234">DNA repair</keyword>
<keyword id="KW-0238">DNA-binding</keyword>
<keyword id="KW-0255">Endonuclease</keyword>
<keyword id="KW-0378">Hydrolase</keyword>
<keyword id="KW-0460">Magnesium</keyword>
<keyword id="KW-0479">Metal-binding</keyword>
<keyword id="KW-0540">Nuclease</keyword>
<keyword id="KW-1185">Reference proteome</keyword>
<reference key="1">
    <citation type="journal article" date="2005" name="Nat. Biotechnol.">
        <title>The genome sequence of the ethanologenic bacterium Zymomonas mobilis ZM4.</title>
        <authorList>
            <person name="Seo J.-S."/>
            <person name="Chong H."/>
            <person name="Park H.S."/>
            <person name="Yoon K.-O."/>
            <person name="Jung C."/>
            <person name="Kim J.J."/>
            <person name="Hong J.H."/>
            <person name="Kim H."/>
            <person name="Kim J.-H."/>
            <person name="Kil J.-I."/>
            <person name="Park C.J."/>
            <person name="Oh H.-M."/>
            <person name="Lee J.-S."/>
            <person name="Jin S.-J."/>
            <person name="Um H.-W."/>
            <person name="Lee H.-J."/>
            <person name="Oh S.-J."/>
            <person name="Kim J.Y."/>
            <person name="Kang H.L."/>
            <person name="Lee S.Y."/>
            <person name="Lee K.J."/>
            <person name="Kang H.S."/>
        </authorList>
    </citation>
    <scope>NUCLEOTIDE SEQUENCE [LARGE SCALE GENOMIC DNA]</scope>
    <source>
        <strain>ATCC 31821 / ZM4 / CP4</strain>
    </source>
</reference>
<feature type="chain" id="PRO_0000225192" description="Crossover junction endodeoxyribonuclease RuvC">
    <location>
        <begin position="1"/>
        <end position="167"/>
    </location>
</feature>
<feature type="active site" evidence="1">
    <location>
        <position position="7"/>
    </location>
</feature>
<feature type="active site" evidence="1">
    <location>
        <position position="67"/>
    </location>
</feature>
<feature type="active site" evidence="1">
    <location>
        <position position="139"/>
    </location>
</feature>
<feature type="binding site" evidence="1">
    <location>
        <position position="7"/>
    </location>
    <ligand>
        <name>Mg(2+)</name>
        <dbReference type="ChEBI" id="CHEBI:18420"/>
        <label>1</label>
    </ligand>
</feature>
<feature type="binding site" evidence="1">
    <location>
        <position position="67"/>
    </location>
    <ligand>
        <name>Mg(2+)</name>
        <dbReference type="ChEBI" id="CHEBI:18420"/>
        <label>2</label>
    </ligand>
</feature>
<feature type="binding site" evidence="1">
    <location>
        <position position="139"/>
    </location>
    <ligand>
        <name>Mg(2+)</name>
        <dbReference type="ChEBI" id="CHEBI:18420"/>
        <label>1</label>
    </ligand>
</feature>
<proteinExistence type="inferred from homology"/>
<organism>
    <name type="scientific">Zymomonas mobilis subsp. mobilis (strain ATCC 31821 / ZM4 / CP4)</name>
    <dbReference type="NCBI Taxonomy" id="264203"/>
    <lineage>
        <taxon>Bacteria</taxon>
        <taxon>Pseudomonadati</taxon>
        <taxon>Pseudomonadota</taxon>
        <taxon>Alphaproteobacteria</taxon>
        <taxon>Sphingomonadales</taxon>
        <taxon>Zymomonadaceae</taxon>
        <taxon>Zymomonas</taxon>
    </lineage>
</organism>
<evidence type="ECO:0000255" key="1">
    <source>
        <dbReference type="HAMAP-Rule" id="MF_00034"/>
    </source>
</evidence>
<gene>
    <name evidence="1" type="primary">ruvC</name>
    <name type="ordered locus">ZMO0154</name>
</gene>
<accession>Q5NR76</accession>